<name>SEC11_ARTOC</name>
<reference key="1">
    <citation type="journal article" date="2012" name="MBio">
        <title>Comparative genome analysis of Trichophyton rubrum and related dermatophytes reveals candidate genes involved in infection.</title>
        <authorList>
            <person name="Martinez D.A."/>
            <person name="Oliver B.G."/>
            <person name="Graeser Y."/>
            <person name="Goldberg J.M."/>
            <person name="Li W."/>
            <person name="Martinez-Rossi N.M."/>
            <person name="Monod M."/>
            <person name="Shelest E."/>
            <person name="Barton R.C."/>
            <person name="Birch E."/>
            <person name="Brakhage A.A."/>
            <person name="Chen Z."/>
            <person name="Gurr S.J."/>
            <person name="Heiman D."/>
            <person name="Heitman J."/>
            <person name="Kosti I."/>
            <person name="Rossi A."/>
            <person name="Saif S."/>
            <person name="Samalova M."/>
            <person name="Saunders C.W."/>
            <person name="Shea T."/>
            <person name="Summerbell R.C."/>
            <person name="Xu J."/>
            <person name="Young S."/>
            <person name="Zeng Q."/>
            <person name="Birren B.W."/>
            <person name="Cuomo C.A."/>
            <person name="White T.C."/>
        </authorList>
    </citation>
    <scope>NUCLEOTIDE SEQUENCE [LARGE SCALE GENOMIC DNA]</scope>
    <source>
        <strain>ATCC MYA-4605 / CBS 113480</strain>
    </source>
</reference>
<proteinExistence type="inferred from homology"/>
<keyword id="KW-0256">Endoplasmic reticulum</keyword>
<keyword id="KW-0325">Glycoprotein</keyword>
<keyword id="KW-0378">Hydrolase</keyword>
<keyword id="KW-0472">Membrane</keyword>
<keyword id="KW-0645">Protease</keyword>
<keyword id="KW-1185">Reference proteome</keyword>
<keyword id="KW-0735">Signal-anchor</keyword>
<keyword id="KW-0812">Transmembrane</keyword>
<keyword id="KW-1133">Transmembrane helix</keyword>
<protein>
    <recommendedName>
        <fullName>Signal peptidase complex catalytic subunit SEC11</fullName>
        <ecNumber evidence="1">3.4.21.89</ecNumber>
    </recommendedName>
    <alternativeName>
        <fullName>Signal peptidase I</fullName>
    </alternativeName>
</protein>
<feature type="chain" id="PRO_0000412314" description="Signal peptidase complex catalytic subunit SEC11">
    <location>
        <begin position="1"/>
        <end position="200"/>
    </location>
</feature>
<feature type="topological domain" description="Cytoplasmic" evidence="3">
    <location>
        <begin position="1"/>
        <end position="14"/>
    </location>
</feature>
<feature type="transmembrane region" description="Helical; Signal-anchor for type II membrane protein" evidence="3">
    <location>
        <begin position="15"/>
        <end position="33"/>
    </location>
</feature>
<feature type="topological domain" description="Lumenal" evidence="3">
    <location>
        <begin position="34"/>
        <end position="200"/>
    </location>
</feature>
<feature type="region of interest" description="Disordered" evidence="4">
    <location>
        <begin position="101"/>
        <end position="129"/>
    </location>
</feature>
<feature type="region of interest" description="C-terminal short (CTS) helix" evidence="2">
    <location>
        <begin position="186"/>
        <end position="197"/>
    </location>
</feature>
<feature type="compositionally biased region" description="Low complexity" evidence="4">
    <location>
        <begin position="118"/>
        <end position="128"/>
    </location>
</feature>
<feature type="active site" description="Charge relay system" evidence="1">
    <location>
        <position position="53"/>
    </location>
</feature>
<feature type="active site" description="Charge relay system" evidence="1">
    <location>
        <position position="92"/>
    </location>
</feature>
<feature type="active site" description="Charge relay system" evidence="1">
    <location>
        <position position="142"/>
    </location>
</feature>
<feature type="glycosylation site" description="N-linked (GlcNAc...) asparagine" evidence="3">
    <location>
        <position position="105"/>
    </location>
</feature>
<evidence type="ECO:0000250" key="1">
    <source>
        <dbReference type="UniProtKB" id="P15367"/>
    </source>
</evidence>
<evidence type="ECO:0000250" key="2">
    <source>
        <dbReference type="UniProtKB" id="P67812"/>
    </source>
</evidence>
<evidence type="ECO:0000255" key="3"/>
<evidence type="ECO:0000256" key="4">
    <source>
        <dbReference type="SAM" id="MobiDB-lite"/>
    </source>
</evidence>
<evidence type="ECO:0000305" key="5"/>
<organism>
    <name type="scientific">Arthroderma otae (strain ATCC MYA-4605 / CBS 113480)</name>
    <name type="common">Microsporum canis</name>
    <dbReference type="NCBI Taxonomy" id="554155"/>
    <lineage>
        <taxon>Eukaryota</taxon>
        <taxon>Fungi</taxon>
        <taxon>Dikarya</taxon>
        <taxon>Ascomycota</taxon>
        <taxon>Pezizomycotina</taxon>
        <taxon>Eurotiomycetes</taxon>
        <taxon>Eurotiomycetidae</taxon>
        <taxon>Onygenales</taxon>
        <taxon>Arthrodermataceae</taxon>
        <taxon>Microsporum</taxon>
    </lineage>
</organism>
<dbReference type="EC" id="3.4.21.89" evidence="1"/>
<dbReference type="EMBL" id="DS995704">
    <property type="protein sequence ID" value="EEQ31998.1"/>
    <property type="molecule type" value="Genomic_DNA"/>
</dbReference>
<dbReference type="RefSeq" id="XP_002847080.1">
    <property type="nucleotide sequence ID" value="XM_002847034.1"/>
</dbReference>
<dbReference type="SMR" id="C5FQ45"/>
<dbReference type="STRING" id="554155.C5FQ45"/>
<dbReference type="MEROPS" id="S26.010"/>
<dbReference type="GlyCosmos" id="C5FQ45">
    <property type="glycosylation" value="1 site, No reported glycans"/>
</dbReference>
<dbReference type="GeneID" id="9226093"/>
<dbReference type="VEuPathDB" id="FungiDB:MCYG_04817"/>
<dbReference type="eggNOG" id="KOG3342">
    <property type="taxonomic scope" value="Eukaryota"/>
</dbReference>
<dbReference type="HOGENOM" id="CLU_089996_0_0_1"/>
<dbReference type="OMA" id="ILMNEYP"/>
<dbReference type="OrthoDB" id="10257561at2759"/>
<dbReference type="Proteomes" id="UP000002035">
    <property type="component" value="Unassembled WGS sequence"/>
</dbReference>
<dbReference type="GO" id="GO:0005787">
    <property type="term" value="C:signal peptidase complex"/>
    <property type="evidence" value="ECO:0007669"/>
    <property type="project" value="EnsemblFungi"/>
</dbReference>
<dbReference type="GO" id="GO:0004252">
    <property type="term" value="F:serine-type endopeptidase activity"/>
    <property type="evidence" value="ECO:0007669"/>
    <property type="project" value="UniProtKB-EC"/>
</dbReference>
<dbReference type="GO" id="GO:0045047">
    <property type="term" value="P:protein targeting to ER"/>
    <property type="evidence" value="ECO:0007669"/>
    <property type="project" value="EnsemblFungi"/>
</dbReference>
<dbReference type="GO" id="GO:0006465">
    <property type="term" value="P:signal peptide processing"/>
    <property type="evidence" value="ECO:0007669"/>
    <property type="project" value="EnsemblFungi"/>
</dbReference>
<dbReference type="CDD" id="cd06530">
    <property type="entry name" value="S26_SPase_I"/>
    <property type="match status" value="1"/>
</dbReference>
<dbReference type="InterPro" id="IPR036286">
    <property type="entry name" value="LexA/Signal_pep-like_sf"/>
</dbReference>
<dbReference type="InterPro" id="IPR019756">
    <property type="entry name" value="Pept_S26A_signal_pept_1_Ser-AS"/>
</dbReference>
<dbReference type="InterPro" id="IPR019533">
    <property type="entry name" value="Peptidase_S26"/>
</dbReference>
<dbReference type="InterPro" id="IPR001733">
    <property type="entry name" value="Peptidase_S26B"/>
</dbReference>
<dbReference type="NCBIfam" id="TIGR02228">
    <property type="entry name" value="sigpep_I_arch"/>
    <property type="match status" value="1"/>
</dbReference>
<dbReference type="PANTHER" id="PTHR10806">
    <property type="entry name" value="SIGNAL PEPTIDASE COMPLEX CATALYTIC SUBUNIT SEC11"/>
    <property type="match status" value="1"/>
</dbReference>
<dbReference type="PANTHER" id="PTHR10806:SF6">
    <property type="entry name" value="SIGNAL PEPTIDASE COMPLEX CATALYTIC SUBUNIT SEC11"/>
    <property type="match status" value="1"/>
</dbReference>
<dbReference type="SUPFAM" id="SSF51306">
    <property type="entry name" value="LexA/Signal peptidase"/>
    <property type="match status" value="1"/>
</dbReference>
<dbReference type="PROSITE" id="PS00501">
    <property type="entry name" value="SPASE_I_1"/>
    <property type="match status" value="1"/>
</dbReference>
<accession>C5FQ45</accession>
<comment type="function">
    <text evidence="1 2">Catalytic component of the signal peptidase complex (SPC) which catalyzes the cleavage of N-terminal signal sequences from nascent proteins as they are translocated into the lumen of the endoplasmic reticulum (By similarity). Specifically cleaves N-terminal signal peptides that contain a hydrophobic alpha-helix (h-region) shorter than 18-20 amino acids (By similarity).</text>
</comment>
<comment type="catalytic activity">
    <reaction evidence="1">
        <text>Cleavage of hydrophobic, N-terminal signal or leader sequences from secreted and periplasmic proteins.</text>
        <dbReference type="EC" id="3.4.21.89"/>
    </reaction>
</comment>
<comment type="subunit">
    <text evidence="1 2">Component of the signal peptidase complex (SPC) composed of a catalytic subunit SEC11 and three accessory subunits SPC1, SPC2 and SPC3 (By similarity). The complex induces a local thinning of the ER membrane which is used to measure the length of the signal peptide (SP) h-region of protein substrates. This ensures the selectivity of the complex towards h-regions shorter than 18-20 amino acids (By similarity). SPC associates with the translocon complex (By similarity).</text>
</comment>
<comment type="subcellular location">
    <subcellularLocation>
        <location evidence="1">Endoplasmic reticulum membrane</location>
        <topology evidence="1">Single-pass type II membrane protein</topology>
    </subcellularLocation>
</comment>
<comment type="domain">
    <text evidence="2">The C-terminal short (CTS) helix is essential for catalytic activity. It may be accommodated as a transmembrane helix in the thinned membrane environment of the complex, similarly to the signal peptide in the complex substrates.</text>
</comment>
<comment type="similarity">
    <text evidence="5">Belongs to the peptidase S26B family.</text>
</comment>
<gene>
    <name type="primary">SEC11</name>
    <name type="ORF">MCYG_04817</name>
</gene>
<sequence>MFAELAPYLSNPRQTLAQILNFALVLSTAFMGWKALSVYTNSPSPIVVVLSGSMEPAFQRGDLLFLWNNSPRAEVGEIVVYNVQGKDIPIVHRVIKAFGAGDGGNKSQRRLEREADKPSGPGLSSPLSHQILTKGDNNIADDTELYAQGQDYLDRKLDIVGSVRGYIPAVGYVTIMLAENPWMKTVLLGIMGVMVMLQRE</sequence>